<keyword id="KW-0004">4Fe-4S</keyword>
<keyword id="KW-0963">Cytoplasm</keyword>
<keyword id="KW-0408">Iron</keyword>
<keyword id="KW-0411">Iron-sulfur</keyword>
<keyword id="KW-0479">Metal-binding</keyword>
<keyword id="KW-1185">Reference proteome</keyword>
<keyword id="KW-0949">S-adenosyl-L-methionine</keyword>
<keyword id="KW-0808">Transferase</keyword>
<proteinExistence type="inferred from homology"/>
<dbReference type="EC" id="2.8.1.8" evidence="1"/>
<dbReference type="EMBL" id="AE008922">
    <property type="protein sequence ID" value="AAM42721.1"/>
    <property type="molecule type" value="Genomic_DNA"/>
</dbReference>
<dbReference type="RefSeq" id="NP_638797.1">
    <property type="nucleotide sequence ID" value="NC_003902.1"/>
</dbReference>
<dbReference type="RefSeq" id="WP_011038549.1">
    <property type="nucleotide sequence ID" value="NC_003902.1"/>
</dbReference>
<dbReference type="SMR" id="Q8P590"/>
<dbReference type="STRING" id="190485.XCC3451"/>
<dbReference type="EnsemblBacteria" id="AAM42721">
    <property type="protein sequence ID" value="AAM42721"/>
    <property type="gene ID" value="XCC3451"/>
</dbReference>
<dbReference type="KEGG" id="xcc:XCC3451"/>
<dbReference type="PATRIC" id="fig|190485.4.peg.3690"/>
<dbReference type="eggNOG" id="COG0320">
    <property type="taxonomic scope" value="Bacteria"/>
</dbReference>
<dbReference type="HOGENOM" id="CLU_033144_2_1_6"/>
<dbReference type="OrthoDB" id="9787898at2"/>
<dbReference type="UniPathway" id="UPA00538">
    <property type="reaction ID" value="UER00593"/>
</dbReference>
<dbReference type="Proteomes" id="UP000001010">
    <property type="component" value="Chromosome"/>
</dbReference>
<dbReference type="GO" id="GO:0005737">
    <property type="term" value="C:cytoplasm"/>
    <property type="evidence" value="ECO:0007669"/>
    <property type="project" value="UniProtKB-SubCell"/>
</dbReference>
<dbReference type="GO" id="GO:0051539">
    <property type="term" value="F:4 iron, 4 sulfur cluster binding"/>
    <property type="evidence" value="ECO:0007669"/>
    <property type="project" value="UniProtKB-UniRule"/>
</dbReference>
<dbReference type="GO" id="GO:0016992">
    <property type="term" value="F:lipoate synthase activity"/>
    <property type="evidence" value="ECO:0007669"/>
    <property type="project" value="UniProtKB-UniRule"/>
</dbReference>
<dbReference type="GO" id="GO:0046872">
    <property type="term" value="F:metal ion binding"/>
    <property type="evidence" value="ECO:0007669"/>
    <property type="project" value="UniProtKB-KW"/>
</dbReference>
<dbReference type="CDD" id="cd01335">
    <property type="entry name" value="Radical_SAM"/>
    <property type="match status" value="1"/>
</dbReference>
<dbReference type="FunFam" id="3.20.20.70:FF:000023">
    <property type="entry name" value="Lipoyl synthase"/>
    <property type="match status" value="1"/>
</dbReference>
<dbReference type="Gene3D" id="3.20.20.70">
    <property type="entry name" value="Aldolase class I"/>
    <property type="match status" value="1"/>
</dbReference>
<dbReference type="HAMAP" id="MF_00206">
    <property type="entry name" value="Lipoyl_synth"/>
    <property type="match status" value="1"/>
</dbReference>
<dbReference type="InterPro" id="IPR013785">
    <property type="entry name" value="Aldolase_TIM"/>
</dbReference>
<dbReference type="InterPro" id="IPR006638">
    <property type="entry name" value="Elp3/MiaA/NifB-like_rSAM"/>
</dbReference>
<dbReference type="InterPro" id="IPR031691">
    <property type="entry name" value="LIAS_N"/>
</dbReference>
<dbReference type="InterPro" id="IPR003698">
    <property type="entry name" value="Lipoyl_synth"/>
</dbReference>
<dbReference type="InterPro" id="IPR007197">
    <property type="entry name" value="rSAM"/>
</dbReference>
<dbReference type="NCBIfam" id="TIGR00510">
    <property type="entry name" value="lipA"/>
    <property type="match status" value="1"/>
</dbReference>
<dbReference type="NCBIfam" id="NF004019">
    <property type="entry name" value="PRK05481.1"/>
    <property type="match status" value="1"/>
</dbReference>
<dbReference type="NCBIfam" id="NF009544">
    <property type="entry name" value="PRK12928.1"/>
    <property type="match status" value="1"/>
</dbReference>
<dbReference type="PANTHER" id="PTHR10949">
    <property type="entry name" value="LIPOYL SYNTHASE"/>
    <property type="match status" value="1"/>
</dbReference>
<dbReference type="PANTHER" id="PTHR10949:SF0">
    <property type="entry name" value="LIPOYL SYNTHASE, MITOCHONDRIAL"/>
    <property type="match status" value="1"/>
</dbReference>
<dbReference type="Pfam" id="PF16881">
    <property type="entry name" value="LIAS_N"/>
    <property type="match status" value="1"/>
</dbReference>
<dbReference type="Pfam" id="PF04055">
    <property type="entry name" value="Radical_SAM"/>
    <property type="match status" value="1"/>
</dbReference>
<dbReference type="PIRSF" id="PIRSF005963">
    <property type="entry name" value="Lipoyl_synth"/>
    <property type="match status" value="1"/>
</dbReference>
<dbReference type="SFLD" id="SFLDF00271">
    <property type="entry name" value="lipoyl_synthase"/>
    <property type="match status" value="1"/>
</dbReference>
<dbReference type="SFLD" id="SFLDG01058">
    <property type="entry name" value="lipoyl_synthase_like"/>
    <property type="match status" value="1"/>
</dbReference>
<dbReference type="SMART" id="SM00729">
    <property type="entry name" value="Elp3"/>
    <property type="match status" value="1"/>
</dbReference>
<dbReference type="SUPFAM" id="SSF102114">
    <property type="entry name" value="Radical SAM enzymes"/>
    <property type="match status" value="1"/>
</dbReference>
<dbReference type="PROSITE" id="PS51918">
    <property type="entry name" value="RADICAL_SAM"/>
    <property type="match status" value="1"/>
</dbReference>
<protein>
    <recommendedName>
        <fullName evidence="1">Lipoyl synthase</fullName>
        <ecNumber evidence="1">2.8.1.8</ecNumber>
    </recommendedName>
    <alternativeName>
        <fullName evidence="1">Lip-syn</fullName>
        <shortName evidence="1">LS</shortName>
    </alternativeName>
    <alternativeName>
        <fullName evidence="1">Lipoate synthase</fullName>
    </alternativeName>
    <alternativeName>
        <fullName evidence="1">Lipoic acid synthase</fullName>
    </alternativeName>
    <alternativeName>
        <fullName evidence="1">Sulfur insertion protein LipA</fullName>
    </alternativeName>
</protein>
<gene>
    <name evidence="1" type="primary">lipA</name>
    <name type="ordered locus">XCC3451</name>
</gene>
<evidence type="ECO:0000255" key="1">
    <source>
        <dbReference type="HAMAP-Rule" id="MF_00206"/>
    </source>
</evidence>
<evidence type="ECO:0000255" key="2">
    <source>
        <dbReference type="PROSITE-ProRule" id="PRU01266"/>
    </source>
</evidence>
<name>LIPA_XANCP</name>
<reference key="1">
    <citation type="journal article" date="2002" name="Nature">
        <title>Comparison of the genomes of two Xanthomonas pathogens with differing host specificities.</title>
        <authorList>
            <person name="da Silva A.C.R."/>
            <person name="Ferro J.A."/>
            <person name="Reinach F.C."/>
            <person name="Farah C.S."/>
            <person name="Furlan L.R."/>
            <person name="Quaggio R.B."/>
            <person name="Monteiro-Vitorello C.B."/>
            <person name="Van Sluys M.A."/>
            <person name="Almeida N.F. Jr."/>
            <person name="Alves L.M.C."/>
            <person name="do Amaral A.M."/>
            <person name="Bertolini M.C."/>
            <person name="Camargo L.E.A."/>
            <person name="Camarotte G."/>
            <person name="Cannavan F."/>
            <person name="Cardozo J."/>
            <person name="Chambergo F."/>
            <person name="Ciapina L.P."/>
            <person name="Cicarelli R.M.B."/>
            <person name="Coutinho L.L."/>
            <person name="Cursino-Santos J.R."/>
            <person name="El-Dorry H."/>
            <person name="Faria J.B."/>
            <person name="Ferreira A.J.S."/>
            <person name="Ferreira R.C.C."/>
            <person name="Ferro M.I.T."/>
            <person name="Formighieri E.F."/>
            <person name="Franco M.C."/>
            <person name="Greggio C.C."/>
            <person name="Gruber A."/>
            <person name="Katsuyama A.M."/>
            <person name="Kishi L.T."/>
            <person name="Leite R.P."/>
            <person name="Lemos E.G.M."/>
            <person name="Lemos M.V.F."/>
            <person name="Locali E.C."/>
            <person name="Machado M.A."/>
            <person name="Madeira A.M.B.N."/>
            <person name="Martinez-Rossi N.M."/>
            <person name="Martins E.C."/>
            <person name="Meidanis J."/>
            <person name="Menck C.F.M."/>
            <person name="Miyaki C.Y."/>
            <person name="Moon D.H."/>
            <person name="Moreira L.M."/>
            <person name="Novo M.T.M."/>
            <person name="Okura V.K."/>
            <person name="Oliveira M.C."/>
            <person name="Oliveira V.R."/>
            <person name="Pereira H.A."/>
            <person name="Rossi A."/>
            <person name="Sena J.A.D."/>
            <person name="Silva C."/>
            <person name="de Souza R.F."/>
            <person name="Spinola L.A.F."/>
            <person name="Takita M.A."/>
            <person name="Tamura R.E."/>
            <person name="Teixeira E.C."/>
            <person name="Tezza R.I.D."/>
            <person name="Trindade dos Santos M."/>
            <person name="Truffi D."/>
            <person name="Tsai S.M."/>
            <person name="White F.F."/>
            <person name="Setubal J.C."/>
            <person name="Kitajima J.P."/>
        </authorList>
    </citation>
    <scope>NUCLEOTIDE SEQUENCE [LARGE SCALE GENOMIC DNA]</scope>
    <source>
        <strain>ATCC 33913 / DSM 3586 / NCPPB 528 / LMG 568 / P 25</strain>
    </source>
</reference>
<comment type="function">
    <text evidence="1">Catalyzes the radical-mediated insertion of two sulfur atoms into the C-6 and C-8 positions of the octanoyl moiety bound to the lipoyl domains of lipoate-dependent enzymes, thereby converting the octanoylated domains into lipoylated derivatives.</text>
</comment>
<comment type="catalytic activity">
    <reaction evidence="1">
        <text>[[Fe-S] cluster scaffold protein carrying a second [4Fe-4S](2+) cluster] + N(6)-octanoyl-L-lysyl-[protein] + 2 oxidized [2Fe-2S]-[ferredoxin] + 2 S-adenosyl-L-methionine + 4 H(+) = [[Fe-S] cluster scaffold protein] + N(6)-[(R)-dihydrolipoyl]-L-lysyl-[protein] + 4 Fe(3+) + 2 hydrogen sulfide + 2 5'-deoxyadenosine + 2 L-methionine + 2 reduced [2Fe-2S]-[ferredoxin]</text>
        <dbReference type="Rhea" id="RHEA:16585"/>
        <dbReference type="Rhea" id="RHEA-COMP:9928"/>
        <dbReference type="Rhea" id="RHEA-COMP:10000"/>
        <dbReference type="Rhea" id="RHEA-COMP:10001"/>
        <dbReference type="Rhea" id="RHEA-COMP:10475"/>
        <dbReference type="Rhea" id="RHEA-COMP:14568"/>
        <dbReference type="Rhea" id="RHEA-COMP:14569"/>
        <dbReference type="ChEBI" id="CHEBI:15378"/>
        <dbReference type="ChEBI" id="CHEBI:17319"/>
        <dbReference type="ChEBI" id="CHEBI:29034"/>
        <dbReference type="ChEBI" id="CHEBI:29919"/>
        <dbReference type="ChEBI" id="CHEBI:33722"/>
        <dbReference type="ChEBI" id="CHEBI:33737"/>
        <dbReference type="ChEBI" id="CHEBI:33738"/>
        <dbReference type="ChEBI" id="CHEBI:57844"/>
        <dbReference type="ChEBI" id="CHEBI:59789"/>
        <dbReference type="ChEBI" id="CHEBI:78809"/>
        <dbReference type="ChEBI" id="CHEBI:83100"/>
        <dbReference type="EC" id="2.8.1.8"/>
    </reaction>
</comment>
<comment type="cofactor">
    <cofactor evidence="1">
        <name>[4Fe-4S] cluster</name>
        <dbReference type="ChEBI" id="CHEBI:49883"/>
    </cofactor>
    <text evidence="1">Binds 2 [4Fe-4S] clusters per subunit. One cluster is coordinated with 3 cysteines and an exchangeable S-adenosyl-L-methionine.</text>
</comment>
<comment type="pathway">
    <text evidence="1">Protein modification; protein lipoylation via endogenous pathway; protein N(6)-(lipoyl)lysine from octanoyl-[acyl-carrier-protein]: step 2/2.</text>
</comment>
<comment type="subcellular location">
    <subcellularLocation>
        <location evidence="1">Cytoplasm</location>
    </subcellularLocation>
</comment>
<comment type="similarity">
    <text evidence="1">Belongs to the radical SAM superfamily. Lipoyl synthase family.</text>
</comment>
<accession>Q8P590</accession>
<organism>
    <name type="scientific">Xanthomonas campestris pv. campestris (strain ATCC 33913 / DSM 3586 / NCPPB 528 / LMG 568 / P 25)</name>
    <dbReference type="NCBI Taxonomy" id="190485"/>
    <lineage>
        <taxon>Bacteria</taxon>
        <taxon>Pseudomonadati</taxon>
        <taxon>Pseudomonadota</taxon>
        <taxon>Gammaproteobacteria</taxon>
        <taxon>Lysobacterales</taxon>
        <taxon>Lysobacteraceae</taxon>
        <taxon>Xanthomonas</taxon>
    </lineage>
</organism>
<sequence>MTQPIARSIPLQVVSGDTAAPASLQTGVKQIGGDKINRSPVQFVDAPVLRKPSWIRVRIPSGNAVQNLKAKLRENRLVTVCEEASCPNIHECFSHGTATFMILGEVCTRRCSFCDVAHGRPKPPDASEPASLATTVADMGLKYVVVTSVDRDDLRDGGAQHFVDCISAIRASAPKTRIEILTPDFRGKGRMDRALEILATSPPDVFNHNIETVPDLYPNVRPGADYQWSLTLLQRFKAQHPTIATKSGIMLGLGETMEQVQVTLRDLRAHDVDMITIGQYLQPTPHHHPVMRYWTPEEYKALEEYGNALGFSHVASGPMVRSSYHADRQAAGAGVAA</sequence>
<feature type="chain" id="PRO_0000102384" description="Lipoyl synthase">
    <location>
        <begin position="1"/>
        <end position="337"/>
    </location>
</feature>
<feature type="domain" description="Radical SAM core" evidence="2">
    <location>
        <begin position="93"/>
        <end position="312"/>
    </location>
</feature>
<feature type="binding site" evidence="1">
    <location>
        <position position="81"/>
    </location>
    <ligand>
        <name>[4Fe-4S] cluster</name>
        <dbReference type="ChEBI" id="CHEBI:49883"/>
        <label>1</label>
    </ligand>
</feature>
<feature type="binding site" evidence="1">
    <location>
        <position position="86"/>
    </location>
    <ligand>
        <name>[4Fe-4S] cluster</name>
        <dbReference type="ChEBI" id="CHEBI:49883"/>
        <label>1</label>
    </ligand>
</feature>
<feature type="binding site" evidence="1">
    <location>
        <position position="92"/>
    </location>
    <ligand>
        <name>[4Fe-4S] cluster</name>
        <dbReference type="ChEBI" id="CHEBI:49883"/>
        <label>1</label>
    </ligand>
</feature>
<feature type="binding site" evidence="1">
    <location>
        <position position="107"/>
    </location>
    <ligand>
        <name>[4Fe-4S] cluster</name>
        <dbReference type="ChEBI" id="CHEBI:49883"/>
        <label>2</label>
        <note>4Fe-4S-S-AdoMet</note>
    </ligand>
</feature>
<feature type="binding site" evidence="1">
    <location>
        <position position="111"/>
    </location>
    <ligand>
        <name>[4Fe-4S] cluster</name>
        <dbReference type="ChEBI" id="CHEBI:49883"/>
        <label>2</label>
        <note>4Fe-4S-S-AdoMet</note>
    </ligand>
</feature>
<feature type="binding site" evidence="1">
    <location>
        <position position="114"/>
    </location>
    <ligand>
        <name>[4Fe-4S] cluster</name>
        <dbReference type="ChEBI" id="CHEBI:49883"/>
        <label>2</label>
        <note>4Fe-4S-S-AdoMet</note>
    </ligand>
</feature>
<feature type="binding site" evidence="1">
    <location>
        <position position="323"/>
    </location>
    <ligand>
        <name>[4Fe-4S] cluster</name>
        <dbReference type="ChEBI" id="CHEBI:49883"/>
        <label>1</label>
    </ligand>
</feature>